<name>TAL1_CHICK</name>
<reference key="1">
    <citation type="journal article" date="1992" name="Nucleic Acids Res.">
        <title>Molecular cloning of the chicken SCL cDNA.</title>
        <authorList>
            <person name="Goodwin G.H."/>
            <person name="Macgregor A."/>
            <person name="Zhu J."/>
            <person name="Crompton M.R."/>
        </authorList>
    </citation>
    <scope>NUCLEOTIDE SEQUENCE [MRNA]</scope>
    <source>
        <tissue>Monoblast</tissue>
    </source>
</reference>
<accession>P24899</accession>
<organism>
    <name type="scientific">Gallus gallus</name>
    <name type="common">Chicken</name>
    <dbReference type="NCBI Taxonomy" id="9031"/>
    <lineage>
        <taxon>Eukaryota</taxon>
        <taxon>Metazoa</taxon>
        <taxon>Chordata</taxon>
        <taxon>Craniata</taxon>
        <taxon>Vertebrata</taxon>
        <taxon>Euteleostomi</taxon>
        <taxon>Archelosauria</taxon>
        <taxon>Archosauria</taxon>
        <taxon>Dinosauria</taxon>
        <taxon>Saurischia</taxon>
        <taxon>Theropoda</taxon>
        <taxon>Coelurosauria</taxon>
        <taxon>Aves</taxon>
        <taxon>Neognathae</taxon>
        <taxon>Galloanserae</taxon>
        <taxon>Galliformes</taxon>
        <taxon>Phasianidae</taxon>
        <taxon>Phasianinae</taxon>
        <taxon>Gallus</taxon>
    </lineage>
</organism>
<evidence type="ECO:0000250" key="1"/>
<evidence type="ECO:0000255" key="2">
    <source>
        <dbReference type="PROSITE-ProRule" id="PRU00981"/>
    </source>
</evidence>
<evidence type="ECO:0000256" key="3">
    <source>
        <dbReference type="SAM" id="MobiDB-lite"/>
    </source>
</evidence>
<keyword id="KW-0217">Developmental protein</keyword>
<keyword id="KW-0221">Differentiation</keyword>
<keyword id="KW-0238">DNA-binding</keyword>
<keyword id="KW-0539">Nucleus</keyword>
<keyword id="KW-0597">Phosphoprotein</keyword>
<keyword id="KW-1185">Reference proteome</keyword>
<keyword id="KW-0804">Transcription</keyword>
<keyword id="KW-0805">Transcription regulation</keyword>
<proteinExistence type="evidence at transcript level"/>
<dbReference type="EMBL" id="X63371">
    <property type="protein sequence ID" value="CAA44971.1"/>
    <property type="molecule type" value="mRNA"/>
</dbReference>
<dbReference type="PIR" id="S20085">
    <property type="entry name" value="S20085"/>
</dbReference>
<dbReference type="RefSeq" id="NP_990683.1">
    <property type="nucleotide sequence ID" value="NM_205352.1"/>
</dbReference>
<dbReference type="SMR" id="P24899"/>
<dbReference type="FunCoup" id="P24899">
    <property type="interactions" value="303"/>
</dbReference>
<dbReference type="STRING" id="9031.ENSGALP00000073780"/>
<dbReference type="PaxDb" id="9031-ENSGALP00000041680"/>
<dbReference type="GeneID" id="396298"/>
<dbReference type="KEGG" id="gga:396298"/>
<dbReference type="CTD" id="6886"/>
<dbReference type="VEuPathDB" id="HostDB:geneid_396298"/>
<dbReference type="eggNOG" id="KOG4029">
    <property type="taxonomic scope" value="Eukaryota"/>
</dbReference>
<dbReference type="HOGENOM" id="CLU_1431139_0_0_1"/>
<dbReference type="InParanoid" id="P24899"/>
<dbReference type="OrthoDB" id="10069510at2759"/>
<dbReference type="PhylomeDB" id="P24899"/>
<dbReference type="PRO" id="PR:P24899"/>
<dbReference type="Proteomes" id="UP000000539">
    <property type="component" value="Unassembled WGS sequence"/>
</dbReference>
<dbReference type="GO" id="GO:0005634">
    <property type="term" value="C:nucleus"/>
    <property type="evidence" value="ECO:0000250"/>
    <property type="project" value="UniProtKB"/>
</dbReference>
<dbReference type="GO" id="GO:0000981">
    <property type="term" value="F:DNA-binding transcription factor activity, RNA polymerase II-specific"/>
    <property type="evidence" value="ECO:0000318"/>
    <property type="project" value="GO_Central"/>
</dbReference>
<dbReference type="GO" id="GO:0046983">
    <property type="term" value="F:protein dimerization activity"/>
    <property type="evidence" value="ECO:0007669"/>
    <property type="project" value="InterPro"/>
</dbReference>
<dbReference type="GO" id="GO:0000978">
    <property type="term" value="F:RNA polymerase II cis-regulatory region sequence-specific DNA binding"/>
    <property type="evidence" value="ECO:0000318"/>
    <property type="project" value="GO_Central"/>
</dbReference>
<dbReference type="GO" id="GO:0030154">
    <property type="term" value="P:cell differentiation"/>
    <property type="evidence" value="ECO:0007669"/>
    <property type="project" value="UniProtKB-KW"/>
</dbReference>
<dbReference type="GO" id="GO:0006357">
    <property type="term" value="P:regulation of transcription by RNA polymerase II"/>
    <property type="evidence" value="ECO:0000318"/>
    <property type="project" value="GO_Central"/>
</dbReference>
<dbReference type="CDD" id="cd19706">
    <property type="entry name" value="bHLH_TS_TAL1"/>
    <property type="match status" value="1"/>
</dbReference>
<dbReference type="FunFam" id="4.10.280.10:FF:000015">
    <property type="entry name" value="T-cell acute lymphocytic leukemia 1"/>
    <property type="match status" value="1"/>
</dbReference>
<dbReference type="Gene3D" id="4.10.280.10">
    <property type="entry name" value="Helix-loop-helix DNA-binding domain"/>
    <property type="match status" value="1"/>
</dbReference>
<dbReference type="InterPro" id="IPR011598">
    <property type="entry name" value="bHLH_dom"/>
</dbReference>
<dbReference type="InterPro" id="IPR036638">
    <property type="entry name" value="HLH_DNA-bd_sf"/>
</dbReference>
<dbReference type="InterPro" id="IPR040238">
    <property type="entry name" value="TAL-like"/>
</dbReference>
<dbReference type="PANTHER" id="PTHR13864:SF15">
    <property type="entry name" value="T-CELL ACUTE LYMPHOCYTIC LEUKEMIA PROTEIN 1 HOMOLOG-RELATED"/>
    <property type="match status" value="1"/>
</dbReference>
<dbReference type="PANTHER" id="PTHR13864">
    <property type="entry name" value="T-CELL ACUTE LYMPHOCYTIC LEUKEMIA/STEM CELL LEUKEMIA-RELATED"/>
    <property type="match status" value="1"/>
</dbReference>
<dbReference type="Pfam" id="PF00010">
    <property type="entry name" value="HLH"/>
    <property type="match status" value="1"/>
</dbReference>
<dbReference type="SMART" id="SM00353">
    <property type="entry name" value="HLH"/>
    <property type="match status" value="1"/>
</dbReference>
<dbReference type="SUPFAM" id="SSF47459">
    <property type="entry name" value="HLH, helix-loop-helix DNA-binding domain"/>
    <property type="match status" value="1"/>
</dbReference>
<dbReference type="PROSITE" id="PS50888">
    <property type="entry name" value="BHLH"/>
    <property type="match status" value="1"/>
</dbReference>
<protein>
    <recommendedName>
        <fullName>T-cell acute lymphocytic leukemia protein 1 homolog</fullName>
        <shortName>TAL-1</shortName>
    </recommendedName>
    <alternativeName>
        <fullName>Stem cell protein</fullName>
    </alternativeName>
</protein>
<feature type="chain" id="PRO_0000127435" description="T-cell acute lymphocytic leukemia protein 1 homolog">
    <location>
        <begin position="1"/>
        <end position="311"/>
    </location>
</feature>
<feature type="domain" description="bHLH" evidence="2">
    <location>
        <begin position="179"/>
        <end position="231"/>
    </location>
</feature>
<feature type="region of interest" description="Disordered" evidence="3">
    <location>
        <begin position="1"/>
        <end position="67"/>
    </location>
</feature>
<feature type="region of interest" description="Disordered" evidence="3">
    <location>
        <begin position="265"/>
        <end position="311"/>
    </location>
</feature>
<feature type="compositionally biased region" description="Pro residues" evidence="3">
    <location>
        <begin position="1"/>
        <end position="14"/>
    </location>
</feature>
<feature type="compositionally biased region" description="Basic and acidic residues" evidence="3">
    <location>
        <begin position="15"/>
        <end position="25"/>
    </location>
</feature>
<feature type="compositionally biased region" description="Basic and acidic residues" evidence="3">
    <location>
        <begin position="284"/>
        <end position="294"/>
    </location>
</feature>
<comment type="function">
    <text>Implicated in the genesis of hemopoietic malignancies. It may play an important role in hemopoietic differentiation.</text>
</comment>
<comment type="subunit">
    <text evidence="1">Efficient DNA binding requires dimerization with another bHLH protein. Forms heterodimers with TCF3 (By similarity).</text>
</comment>
<comment type="subcellular location">
    <subcellularLocation>
        <location evidence="2">Nucleus</location>
    </subcellularLocation>
</comment>
<comment type="PTM">
    <text evidence="1">Phosphorylated on serine residues.</text>
</comment>
<sequence length="311" mass="33768">MTMDRPPAPPPPSSDPRDARRHDPEADATSEPDSSRGGMEPPAEPQLLLNGAAKEAGRPSPGPPAAAVPVIELVRRGGSLDIKSREAAGEAMQRAPGAEPCRAAEAACEARMVQLSPPALPLQPPGRAMLYNLGQPLGTIGSGFFGEPDSFSMYGSNRVKRRPSPYEMEITDGPHTKVVRRIFTNSRERWRQQNVNGAFAELRKLIPTHPPDKKLSKNEILRLAMKYINFLAKLLNDQEEEGNQRGKVNKDSGIVQEDLLQDMLSPNSSCGSSLDGAASPDSFTEEHDTLDSKHARNLHHAILPVEGSAQR</sequence>
<gene>
    <name type="primary">TAL1</name>
    <name type="synonym">SCL</name>
</gene>